<keyword id="KW-0021">Allosteric enzyme</keyword>
<keyword id="KW-0846">Cobalamin</keyword>
<keyword id="KW-0170">Cobalt</keyword>
<keyword id="KW-1015">Disulfide bond</keyword>
<keyword id="KW-0235">DNA replication</keyword>
<keyword id="KW-0560">Oxidoreductase</keyword>
<keyword id="KW-0676">Redox-active center</keyword>
<dbReference type="EC" id="1.17.4.2"/>
<dbReference type="EMBL" id="CP000413">
    <property type="protein sequence ID" value="ABJ60859.1"/>
    <property type="status" value="ALT_INIT"/>
    <property type="molecule type" value="Genomic_DNA"/>
</dbReference>
<dbReference type="SMR" id="Q041L3"/>
<dbReference type="GeneID" id="29638635"/>
<dbReference type="KEGG" id="lga:LGAS_1503"/>
<dbReference type="HOGENOM" id="CLU_002384_0_0_9"/>
<dbReference type="BioCyc" id="LGAS324831:G1G6Y-1498-MONOMER"/>
<dbReference type="Proteomes" id="UP000000664">
    <property type="component" value="Chromosome"/>
</dbReference>
<dbReference type="GO" id="GO:0031419">
    <property type="term" value="F:cobalamin binding"/>
    <property type="evidence" value="ECO:0007669"/>
    <property type="project" value="UniProtKB-KW"/>
</dbReference>
<dbReference type="GO" id="GO:0000166">
    <property type="term" value="F:nucleotide binding"/>
    <property type="evidence" value="ECO:0007669"/>
    <property type="project" value="InterPro"/>
</dbReference>
<dbReference type="GO" id="GO:0004748">
    <property type="term" value="F:ribonucleoside-diphosphate reductase activity, thioredoxin disulfide as acceptor"/>
    <property type="evidence" value="ECO:0007669"/>
    <property type="project" value="InterPro"/>
</dbReference>
<dbReference type="GO" id="GO:0008998">
    <property type="term" value="F:ribonucleoside-triphosphate reductase (thioredoxin) activity"/>
    <property type="evidence" value="ECO:0007669"/>
    <property type="project" value="UniProtKB-EC"/>
</dbReference>
<dbReference type="GO" id="GO:0006260">
    <property type="term" value="P:DNA replication"/>
    <property type="evidence" value="ECO:0007669"/>
    <property type="project" value="UniProtKB-KW"/>
</dbReference>
<dbReference type="Gene3D" id="3.20.70.20">
    <property type="match status" value="1"/>
</dbReference>
<dbReference type="Gene3D" id="3.30.1620.10">
    <property type="entry name" value="b-12 dependent (class ii) ribonucleotide reductase, Chain A, Domain 2"/>
    <property type="match status" value="1"/>
</dbReference>
<dbReference type="Gene3D" id="3.90.1390.10">
    <property type="entry name" value="b-12 dependent (class ii) ribonucleotide reductase, chain A, domain 3"/>
    <property type="match status" value="1"/>
</dbReference>
<dbReference type="InterPro" id="IPR050862">
    <property type="entry name" value="RdRp_reductase_class-2"/>
</dbReference>
<dbReference type="InterPro" id="IPR054158">
    <property type="entry name" value="RNR-II_ins_dom"/>
</dbReference>
<dbReference type="InterPro" id="IPR040763">
    <property type="entry name" value="RNR_alpha_hel"/>
</dbReference>
<dbReference type="InterPro" id="IPR013345">
    <property type="entry name" value="RTP_Rdtase_AdoCbl-dep"/>
</dbReference>
<dbReference type="NCBIfam" id="TIGR02505">
    <property type="entry name" value="RTPR"/>
    <property type="match status" value="1"/>
</dbReference>
<dbReference type="PANTHER" id="PTHR43371:SF1">
    <property type="entry name" value="RIBONUCLEOSIDE-DIPHOSPHATE REDUCTASE"/>
    <property type="match status" value="1"/>
</dbReference>
<dbReference type="PANTHER" id="PTHR43371">
    <property type="entry name" value="VITAMIN B12-DEPENDENT RIBONUCLEOTIDE REDUCTASE"/>
    <property type="match status" value="1"/>
</dbReference>
<dbReference type="Pfam" id="PF21995">
    <property type="entry name" value="RNR-II_ins_dom"/>
    <property type="match status" value="1"/>
</dbReference>
<dbReference type="Pfam" id="PF17975">
    <property type="entry name" value="RNR_Alpha"/>
    <property type="match status" value="1"/>
</dbReference>
<dbReference type="SUPFAM" id="SSF51998">
    <property type="entry name" value="PFL-like glycyl radical enzymes"/>
    <property type="match status" value="1"/>
</dbReference>
<organism>
    <name type="scientific">Lactobacillus gasseri (strain ATCC 33323 / DSM 20243 / BCRC 14619 / CIP 102991 / JCM 1131 / KCTC 3163 / NCIMB 11718 / NCTC 13722 / AM63)</name>
    <dbReference type="NCBI Taxonomy" id="324831"/>
    <lineage>
        <taxon>Bacteria</taxon>
        <taxon>Bacillati</taxon>
        <taxon>Bacillota</taxon>
        <taxon>Bacilli</taxon>
        <taxon>Lactobacillales</taxon>
        <taxon>Lactobacillaceae</taxon>
        <taxon>Lactobacillus</taxon>
    </lineage>
</organism>
<sequence>MSDLRITLDPDFIAQTKKEVTPHWGELGWVTYKRTYARWLDDKNRSENWDETVKRVIEGNINLDPRLKNNPSKKTIHELTAEAKQLFRLVYGLAATPSGRNLWISGTDYQKRNGDSLNNCWFISIRPQKYGNSHIVPAYLTQDQVAPSMPFSFLFDQLMKGGGVGFSVVDENINQIPKLDQKVDLTIVIDKQSKSYDASLKLGATDLDEWKKTNQEKEDYIYYKLPDTREGWVLANARLIDMHFNSTNPENKKKLVLDISDIRPYGAKIHGFGGTASGPMPLIEMLFDINQILNERAGQKLTAVDATDICNLIGKTVVAGNVRRSAELALGSSNNQDFITMKQDKKKLYHHRWASNNSVAINSEFDNYQPIADSILHNGEPGVVNLELSRNYGRIKDGYQAGIDGEVEGTNPCGEISLANGEPCNLFEVFPFIAQKQGWDLKEAFKLAARYTKRVTFSPYDWEVSRKIINKNRRIGVSMSGIQDWILSTFGHRVVTGFKTATDSETGKEIKDPVYDPEIIKTVDGLYQAVVDADKDYSQELNCNTSIKHTTVKPSGTVAKLAGVSEGMHFHYSGYLIQRIRFQETDPLLPALKDCGYRTEPDIYTPHTICVEFPIKAANADSDNFASAGTVSIAEQFATQAFLQTYWSDNAVSCTITFQNDESDQIAPLLHQYRYAIKSTSLLPYYGGSLKQAPKEPISKEKYEKADNHITGNVEIVFEQTNEDQKGLELVDQSDCDNGACPIK</sequence>
<gene>
    <name type="primary">rtpR</name>
    <name type="ordered locus">LGAS_1503</name>
</gene>
<comment type="catalytic activity">
    <reaction>
        <text>a 2'-deoxyribonucleoside 5'-triphosphate + [thioredoxin]-disulfide + H2O = a ribonucleoside 5'-triphosphate + [thioredoxin]-dithiol</text>
        <dbReference type="Rhea" id="RHEA:12701"/>
        <dbReference type="Rhea" id="RHEA-COMP:10698"/>
        <dbReference type="Rhea" id="RHEA-COMP:10700"/>
        <dbReference type="ChEBI" id="CHEBI:15377"/>
        <dbReference type="ChEBI" id="CHEBI:29950"/>
        <dbReference type="ChEBI" id="CHEBI:50058"/>
        <dbReference type="ChEBI" id="CHEBI:61557"/>
        <dbReference type="ChEBI" id="CHEBI:61560"/>
        <dbReference type="EC" id="1.17.4.2"/>
    </reaction>
</comment>
<comment type="cofactor">
    <cofactor evidence="1">
        <name>adenosylcob(III)alamin</name>
        <dbReference type="ChEBI" id="CHEBI:18408"/>
    </cofactor>
</comment>
<comment type="activity regulation">
    <text evidence="1">Allosterically regulated by ATP and dNTP.</text>
</comment>
<comment type="subunit">
    <text evidence="1">Monomer.</text>
</comment>
<comment type="similarity">
    <text evidence="2">Belongs to the class II ribonucleoside-triphosphate reductase family.</text>
</comment>
<comment type="sequence caution" evidence="2">
    <conflict type="erroneous initiation">
        <sequence resource="EMBL-CDS" id="ABJ60859"/>
    </conflict>
</comment>
<reference key="1">
    <citation type="journal article" date="2006" name="Proc. Natl. Acad. Sci. U.S.A.">
        <title>Comparative genomics of the lactic acid bacteria.</title>
        <authorList>
            <person name="Makarova K.S."/>
            <person name="Slesarev A."/>
            <person name="Wolf Y.I."/>
            <person name="Sorokin A."/>
            <person name="Mirkin B."/>
            <person name="Koonin E.V."/>
            <person name="Pavlov A."/>
            <person name="Pavlova N."/>
            <person name="Karamychev V."/>
            <person name="Polouchine N."/>
            <person name="Shakhova V."/>
            <person name="Grigoriev I."/>
            <person name="Lou Y."/>
            <person name="Rohksar D."/>
            <person name="Lucas S."/>
            <person name="Huang K."/>
            <person name="Goodstein D.M."/>
            <person name="Hawkins T."/>
            <person name="Plengvidhya V."/>
            <person name="Welker D."/>
            <person name="Hughes J."/>
            <person name="Goh Y."/>
            <person name="Benson A."/>
            <person name="Baldwin K."/>
            <person name="Lee J.-H."/>
            <person name="Diaz-Muniz I."/>
            <person name="Dosti B."/>
            <person name="Smeianov V."/>
            <person name="Wechter W."/>
            <person name="Barabote R."/>
            <person name="Lorca G."/>
            <person name="Altermann E."/>
            <person name="Barrangou R."/>
            <person name="Ganesan B."/>
            <person name="Xie Y."/>
            <person name="Rawsthorne H."/>
            <person name="Tamir D."/>
            <person name="Parker C."/>
            <person name="Breidt F."/>
            <person name="Broadbent J.R."/>
            <person name="Hutkins R."/>
            <person name="O'Sullivan D."/>
            <person name="Steele J."/>
            <person name="Unlu G."/>
            <person name="Saier M.H. Jr."/>
            <person name="Klaenhammer T."/>
            <person name="Richardson P."/>
            <person name="Kozyavkin S."/>
            <person name="Weimer B.C."/>
            <person name="Mills D.A."/>
        </authorList>
    </citation>
    <scope>NUCLEOTIDE SEQUENCE [LARGE SCALE GENOMIC DNA]</scope>
    <source>
        <strain>ATCC 33323 / DSM 20243 / BCRC 14619 / CIP 102991 / JCM 1131 / KCTC 3163 / NCIMB 11718 / NCTC 13722 / AM63</strain>
    </source>
</reference>
<name>RTPR_LACGA</name>
<feature type="chain" id="PRO_0000326541" description="Adenosylcobalamin-dependent ribonucleoside-triphosphate reductase">
    <location>
        <begin position="1"/>
        <end position="744"/>
    </location>
</feature>
<feature type="region of interest" description="Effector region-1" evidence="1">
    <location>
        <begin position="148"/>
        <end position="159"/>
    </location>
</feature>
<feature type="region of interest" description="Effector region-2" evidence="1">
    <location>
        <begin position="169"/>
        <end position="318"/>
    </location>
</feature>
<feature type="region of interest" description="Adenosylcobalamin-binding-1" evidence="1">
    <location>
        <begin position="570"/>
        <end position="631"/>
    </location>
</feature>
<feature type="region of interest" description="Adenosylcobalamin-binding-2" evidence="1">
    <location>
        <begin position="690"/>
        <end position="729"/>
    </location>
</feature>
<feature type="active site" evidence="1">
    <location>
        <position position="413"/>
    </location>
</feature>
<feature type="active site" evidence="1">
    <location>
        <position position="415"/>
    </location>
</feature>
<feature type="disulfide bond" description="Redox-active" evidence="1">
    <location>
        <begin position="120"/>
        <end position="424"/>
    </location>
</feature>
<proteinExistence type="inferred from homology"/>
<evidence type="ECO:0000250" key="1"/>
<evidence type="ECO:0000305" key="2"/>
<protein>
    <recommendedName>
        <fullName>Adenosylcobalamin-dependent ribonucleoside-triphosphate reductase</fullName>
        <shortName>RTPR</shortName>
        <ecNumber>1.17.4.2</ecNumber>
    </recommendedName>
</protein>
<accession>Q041L3</accession>